<sequence>MKKTAAIISACMLTFALSACSGSNYVMHTNDGRTIVSDGKPQTDNDTGMISYKDANGNKQQINRTDVKEMVELDQ</sequence>
<keyword id="KW-1003">Cell membrane</keyword>
<keyword id="KW-0449">Lipoprotein</keyword>
<keyword id="KW-0472">Membrane</keyword>
<keyword id="KW-0564">Palmitate</keyword>
<keyword id="KW-1185">Reference proteome</keyword>
<keyword id="KW-0732">Signal</keyword>
<proteinExistence type="inferred from homology"/>
<name>YGDI_ECOL6</name>
<evidence type="ECO:0000255" key="1">
    <source>
        <dbReference type="PROSITE-ProRule" id="PRU00303"/>
    </source>
</evidence>
<evidence type="ECO:0000305" key="2"/>
<gene>
    <name type="primary">ygdI</name>
    <name type="ordered locus">c3380</name>
</gene>
<organism>
    <name type="scientific">Escherichia coli O6:H1 (strain CFT073 / ATCC 700928 / UPEC)</name>
    <dbReference type="NCBI Taxonomy" id="199310"/>
    <lineage>
        <taxon>Bacteria</taxon>
        <taxon>Pseudomonadati</taxon>
        <taxon>Pseudomonadota</taxon>
        <taxon>Gammaproteobacteria</taxon>
        <taxon>Enterobacterales</taxon>
        <taxon>Enterobacteriaceae</taxon>
        <taxon>Escherichia</taxon>
    </lineage>
</organism>
<protein>
    <recommendedName>
        <fullName>Uncharacterized lipoprotein YgdI</fullName>
    </recommendedName>
</protein>
<reference key="1">
    <citation type="journal article" date="2002" name="Proc. Natl. Acad. Sci. U.S.A.">
        <title>Extensive mosaic structure revealed by the complete genome sequence of uropathogenic Escherichia coli.</title>
        <authorList>
            <person name="Welch R.A."/>
            <person name="Burland V."/>
            <person name="Plunkett G. III"/>
            <person name="Redford P."/>
            <person name="Roesch P."/>
            <person name="Rasko D."/>
            <person name="Buckles E.L."/>
            <person name="Liou S.-R."/>
            <person name="Boutin A."/>
            <person name="Hackett J."/>
            <person name="Stroud D."/>
            <person name="Mayhew G.F."/>
            <person name="Rose D.J."/>
            <person name="Zhou S."/>
            <person name="Schwartz D.C."/>
            <person name="Perna N.T."/>
            <person name="Mobley H.L.T."/>
            <person name="Donnenberg M.S."/>
            <person name="Blattner F.R."/>
        </authorList>
    </citation>
    <scope>NUCLEOTIDE SEQUENCE [LARGE SCALE GENOMIC DNA]</scope>
    <source>
        <strain>CFT073 / ATCC 700928 / UPEC</strain>
    </source>
</reference>
<accession>P65293</accession>
<accession>Q46924</accession>
<feature type="signal peptide" evidence="1">
    <location>
        <begin position="1"/>
        <end position="19"/>
    </location>
</feature>
<feature type="chain" id="PRO_0000018049" description="Uncharacterized lipoprotein YgdI">
    <location>
        <begin position="20"/>
        <end position="75"/>
    </location>
</feature>
<feature type="lipid moiety-binding region" description="N-palmitoyl cysteine" evidence="1">
    <location>
        <position position="20"/>
    </location>
</feature>
<feature type="lipid moiety-binding region" description="S-diacylglycerol cysteine" evidence="1">
    <location>
        <position position="20"/>
    </location>
</feature>
<comment type="subcellular location">
    <subcellularLocation>
        <location evidence="1">Cell membrane</location>
        <topology evidence="1">Lipid-anchor</topology>
    </subcellularLocation>
</comment>
<comment type="similarity">
    <text evidence="2">To E.coli YgdR.</text>
</comment>
<comment type="sequence caution" evidence="2">
    <conflict type="erroneous initiation">
        <sequence resource="EMBL-CDS" id="AAN81825"/>
    </conflict>
</comment>
<dbReference type="EMBL" id="AE014075">
    <property type="protein sequence ID" value="AAN81825.1"/>
    <property type="status" value="ALT_INIT"/>
    <property type="molecule type" value="Genomic_DNA"/>
</dbReference>
<dbReference type="RefSeq" id="WP_000750398.1">
    <property type="nucleotide sequence ID" value="NZ_CP051263.1"/>
</dbReference>
<dbReference type="SMR" id="P65293"/>
<dbReference type="STRING" id="199310.c3380"/>
<dbReference type="KEGG" id="ecc:c3380"/>
<dbReference type="eggNOG" id="ENOG5032RSI">
    <property type="taxonomic scope" value="Bacteria"/>
</dbReference>
<dbReference type="HOGENOM" id="CLU_182841_0_1_6"/>
<dbReference type="Proteomes" id="UP000001410">
    <property type="component" value="Chromosome"/>
</dbReference>
<dbReference type="GO" id="GO:0005886">
    <property type="term" value="C:plasma membrane"/>
    <property type="evidence" value="ECO:0007669"/>
    <property type="project" value="UniProtKB-SubCell"/>
</dbReference>
<dbReference type="Gene3D" id="2.30.30.100">
    <property type="match status" value="1"/>
</dbReference>
<dbReference type="InterPro" id="IPR010920">
    <property type="entry name" value="LSM_dom_sf"/>
</dbReference>
<dbReference type="InterPro" id="IPR010305">
    <property type="entry name" value="YgdI/YgdR-like"/>
</dbReference>
<dbReference type="InterPro" id="IPR047807">
    <property type="entry name" value="YgdI/YgdR-like_SH3-like"/>
</dbReference>
<dbReference type="NCBIfam" id="NF033216">
    <property type="entry name" value="lipo_YgdI_YgdR"/>
    <property type="match status" value="1"/>
</dbReference>
<dbReference type="PANTHER" id="PTHR37011:SF2">
    <property type="entry name" value="LIPOPROTEIN"/>
    <property type="match status" value="1"/>
</dbReference>
<dbReference type="PANTHER" id="PTHR37011">
    <property type="entry name" value="POT FAMILY PEPTIDE TRANSPORT PROTEIN-RELATED"/>
    <property type="match status" value="1"/>
</dbReference>
<dbReference type="Pfam" id="PF06004">
    <property type="entry name" value="DUF903"/>
    <property type="match status" value="1"/>
</dbReference>
<dbReference type="SUPFAM" id="SSF50182">
    <property type="entry name" value="Sm-like ribonucleoproteins"/>
    <property type="match status" value="1"/>
</dbReference>
<dbReference type="PROSITE" id="PS51257">
    <property type="entry name" value="PROKAR_LIPOPROTEIN"/>
    <property type="match status" value="1"/>
</dbReference>